<organism>
    <name type="scientific">Chlamydia muridarum (strain MoPn / Nigg)</name>
    <dbReference type="NCBI Taxonomy" id="243161"/>
    <lineage>
        <taxon>Bacteria</taxon>
        <taxon>Pseudomonadati</taxon>
        <taxon>Chlamydiota</taxon>
        <taxon>Chlamydiia</taxon>
        <taxon>Chlamydiales</taxon>
        <taxon>Chlamydiaceae</taxon>
        <taxon>Chlamydia/Chlamydophila group</taxon>
        <taxon>Chlamydia</taxon>
    </lineage>
</organism>
<evidence type="ECO:0000250" key="1">
    <source>
        <dbReference type="UniProtKB" id="Q9S529"/>
    </source>
</evidence>
<evidence type="ECO:0000255" key="2"/>
<evidence type="ECO:0000305" key="3"/>
<accession>Q9PJY0</accession>
<name>Y696_CHLMU</name>
<comment type="function">
    <text evidence="1">Part of an ATP-binding cassette (ABC) transport system involved in metal import (By similarity). Binds a metal with high affinity and specificity and delivers it to the membrane permease for translocation into the cytoplasm (By similarity).</text>
</comment>
<comment type="subcellular location">
    <subcellularLocation>
        <location evidence="1">Periplasm</location>
    </subcellularLocation>
</comment>
<comment type="similarity">
    <text evidence="3">Belongs to the bacterial solute-binding protein 9 family.</text>
</comment>
<gene>
    <name type="ordered locus">TC_0696</name>
</gene>
<feature type="signal peptide" evidence="2">
    <location>
        <begin position="1"/>
        <end position="18"/>
    </location>
</feature>
<feature type="chain" id="PRO_0000031902" description="Putative metal-binding protein TC_0696">
    <location>
        <begin position="19"/>
        <end position="276"/>
    </location>
</feature>
<feature type="binding site" evidence="1">
    <location>
        <position position="59"/>
    </location>
    <ligand>
        <name>a divalent metal cation</name>
        <dbReference type="ChEBI" id="CHEBI:60240"/>
    </ligand>
</feature>
<feature type="binding site" evidence="1">
    <location>
        <position position="121"/>
    </location>
    <ligand>
        <name>a divalent metal cation</name>
        <dbReference type="ChEBI" id="CHEBI:60240"/>
    </ligand>
</feature>
<feature type="binding site" evidence="1">
    <location>
        <position position="185"/>
    </location>
    <ligand>
        <name>a divalent metal cation</name>
        <dbReference type="ChEBI" id="CHEBI:60240"/>
    </ligand>
</feature>
<feature type="binding site" evidence="1">
    <location>
        <position position="256"/>
    </location>
    <ligand>
        <name>a divalent metal cation</name>
        <dbReference type="ChEBI" id="CHEBI:60240"/>
    </ligand>
</feature>
<protein>
    <recommendedName>
        <fullName>Putative metal-binding protein TC_0696</fullName>
    </recommendedName>
</protein>
<keyword id="KW-0479">Metal-binding</keyword>
<keyword id="KW-0574">Periplasm</keyword>
<keyword id="KW-0732">Signal</keyword>
<keyword id="KW-0813">Transport</keyword>
<dbReference type="EMBL" id="AE002160">
    <property type="protein sequence ID" value="AAF39512.1"/>
    <property type="molecule type" value="Genomic_DNA"/>
</dbReference>
<dbReference type="PIR" id="C81673">
    <property type="entry name" value="C81673"/>
</dbReference>
<dbReference type="RefSeq" id="WP_010231248.1">
    <property type="nucleotide sequence ID" value="NZ_CP063055.1"/>
</dbReference>
<dbReference type="SMR" id="Q9PJY0"/>
<dbReference type="GeneID" id="1246058"/>
<dbReference type="KEGG" id="cmu:TC_0696"/>
<dbReference type="eggNOG" id="COG0803">
    <property type="taxonomic scope" value="Bacteria"/>
</dbReference>
<dbReference type="HOGENOM" id="CLU_016838_1_0_0"/>
<dbReference type="OrthoDB" id="9810636at2"/>
<dbReference type="Proteomes" id="UP000000800">
    <property type="component" value="Chromosome"/>
</dbReference>
<dbReference type="GO" id="GO:0042597">
    <property type="term" value="C:periplasmic space"/>
    <property type="evidence" value="ECO:0007669"/>
    <property type="project" value="UniProtKB-SubCell"/>
</dbReference>
<dbReference type="GO" id="GO:0046872">
    <property type="term" value="F:metal ion binding"/>
    <property type="evidence" value="ECO:0007669"/>
    <property type="project" value="UniProtKB-KW"/>
</dbReference>
<dbReference type="GO" id="GO:0007155">
    <property type="term" value="P:cell adhesion"/>
    <property type="evidence" value="ECO:0007669"/>
    <property type="project" value="InterPro"/>
</dbReference>
<dbReference type="GO" id="GO:0030001">
    <property type="term" value="P:metal ion transport"/>
    <property type="evidence" value="ECO:0007669"/>
    <property type="project" value="InterPro"/>
</dbReference>
<dbReference type="Gene3D" id="3.40.50.1980">
    <property type="entry name" value="Nitrogenase molybdenum iron protein domain"/>
    <property type="match status" value="2"/>
</dbReference>
<dbReference type="InterPro" id="IPR050492">
    <property type="entry name" value="Bact_metal-bind_prot9"/>
</dbReference>
<dbReference type="InterPro" id="IPR006128">
    <property type="entry name" value="Lipoprotein_PsaA-like"/>
</dbReference>
<dbReference type="InterPro" id="IPR006127">
    <property type="entry name" value="ZnuA-like"/>
</dbReference>
<dbReference type="PANTHER" id="PTHR42953:SF3">
    <property type="entry name" value="HIGH-AFFINITY ZINC UPTAKE SYSTEM PROTEIN ZNUA"/>
    <property type="match status" value="1"/>
</dbReference>
<dbReference type="PANTHER" id="PTHR42953">
    <property type="entry name" value="HIGH-AFFINITY ZINC UPTAKE SYSTEM PROTEIN ZNUA-RELATED"/>
    <property type="match status" value="1"/>
</dbReference>
<dbReference type="Pfam" id="PF01297">
    <property type="entry name" value="ZnuA"/>
    <property type="match status" value="1"/>
</dbReference>
<dbReference type="PRINTS" id="PR00690">
    <property type="entry name" value="ADHESNFAMILY"/>
</dbReference>
<dbReference type="SUPFAM" id="SSF53807">
    <property type="entry name" value="Helical backbone' metal receptor"/>
    <property type="match status" value="1"/>
</dbReference>
<proteinExistence type="inferred from homology"/>
<reference key="1">
    <citation type="journal article" date="2000" name="Nucleic Acids Res.">
        <title>Genome sequences of Chlamydia trachomatis MoPn and Chlamydia pneumoniae AR39.</title>
        <authorList>
            <person name="Read T.D."/>
            <person name="Brunham R.C."/>
            <person name="Shen C."/>
            <person name="Gill S.R."/>
            <person name="Heidelberg J.F."/>
            <person name="White O."/>
            <person name="Hickey E.K."/>
            <person name="Peterson J.D."/>
            <person name="Utterback T.R."/>
            <person name="Berry K.J."/>
            <person name="Bass S."/>
            <person name="Linher K.D."/>
            <person name="Weidman J.F."/>
            <person name="Khouri H.M."/>
            <person name="Craven B."/>
            <person name="Bowman C."/>
            <person name="Dodson R.J."/>
            <person name="Gwinn M.L."/>
            <person name="Nelson W.C."/>
            <person name="DeBoy R.T."/>
            <person name="Kolonay J.F."/>
            <person name="McClarty G."/>
            <person name="Salzberg S.L."/>
            <person name="Eisen J.A."/>
            <person name="Fraser C.M."/>
        </authorList>
    </citation>
    <scope>NUCLEOTIDE SEQUENCE [LARGE SCALE GENOMIC DNA]</scope>
    <source>
        <strain>MoPn / Nigg</strain>
    </source>
</reference>
<sequence length="276" mass="31378">MRLLILLLFSFGIIYSHGDEIPTQKQVLVSIVPYKFLVEQISGDTCQVFSIVMGNRDPHNYELPPKYIEKIRQADLWFRIGEGFERTCERIVSCKQVDLAANIDKIMNGSCCQRFLNFDTHTWLSPKNLKIQIESIAEALIAIAPEHADLYRKNCSLLQDQLDLLDQKVSSIVSQSSQRNVLVAHGAFAYFCRDYGFVQHTIERSNHSELSPKDIVRVEQTIRDHNLHSVVLLKHAGKRSSAALVRKFNMTPVLLDPYAEDVFSNLIAIATAFADL</sequence>